<keyword id="KW-0145">Chemotaxis</keyword>
<keyword id="KW-0963">Cytoplasm</keyword>
<keyword id="KW-0378">Hydrolase</keyword>
<keyword id="KW-0597">Phosphoprotein</keyword>
<keyword id="KW-1185">Reference proteome</keyword>
<feature type="chain" id="PRO_0000264339" description="Protein-glutamate methylesterase/protein-glutamine glutaminase 2">
    <location>
        <begin position="1"/>
        <end position="350"/>
    </location>
</feature>
<feature type="domain" description="Response regulatory" evidence="1">
    <location>
        <begin position="3"/>
        <end position="121"/>
    </location>
</feature>
<feature type="domain" description="CheB-type methylesterase" evidence="1">
    <location>
        <begin position="158"/>
        <end position="322"/>
    </location>
</feature>
<feature type="active site" evidence="1">
    <location>
        <position position="170"/>
    </location>
</feature>
<feature type="active site" evidence="1">
    <location>
        <position position="197"/>
    </location>
</feature>
<feature type="active site" evidence="1">
    <location>
        <position position="290"/>
    </location>
</feature>
<feature type="modified residue" description="4-aspartylphosphate" evidence="1">
    <location>
        <position position="54"/>
    </location>
</feature>
<accession>Q2FQU2</accession>
<organism>
    <name type="scientific">Methanospirillum hungatei JF-1 (strain ATCC 27890 / DSM 864 / NBRC 100397 / JF-1)</name>
    <dbReference type="NCBI Taxonomy" id="323259"/>
    <lineage>
        <taxon>Archaea</taxon>
        <taxon>Methanobacteriati</taxon>
        <taxon>Methanobacteriota</taxon>
        <taxon>Stenosarchaea group</taxon>
        <taxon>Methanomicrobia</taxon>
        <taxon>Methanomicrobiales</taxon>
        <taxon>Methanospirillaceae</taxon>
        <taxon>Methanospirillum</taxon>
    </lineage>
</organism>
<proteinExistence type="inferred from homology"/>
<comment type="function">
    <text evidence="1">Involved in chemotaxis. Part of a chemotaxis signal transduction system that modulates chemotaxis in response to various stimuli. Catalyzes the demethylation of specific methylglutamate residues introduced into the chemoreceptors (methyl-accepting chemotaxis proteins or MCP) by CheR. Also mediates the irreversible deamidation of specific glutamine residues to glutamic acid.</text>
</comment>
<comment type="catalytic activity">
    <reaction evidence="1">
        <text>[protein]-L-glutamate 5-O-methyl ester + H2O = L-glutamyl-[protein] + methanol + H(+)</text>
        <dbReference type="Rhea" id="RHEA:23236"/>
        <dbReference type="Rhea" id="RHEA-COMP:10208"/>
        <dbReference type="Rhea" id="RHEA-COMP:10311"/>
        <dbReference type="ChEBI" id="CHEBI:15377"/>
        <dbReference type="ChEBI" id="CHEBI:15378"/>
        <dbReference type="ChEBI" id="CHEBI:17790"/>
        <dbReference type="ChEBI" id="CHEBI:29973"/>
        <dbReference type="ChEBI" id="CHEBI:82795"/>
        <dbReference type="EC" id="3.1.1.61"/>
    </reaction>
</comment>
<comment type="catalytic activity">
    <reaction evidence="1">
        <text>L-glutaminyl-[protein] + H2O = L-glutamyl-[protein] + NH4(+)</text>
        <dbReference type="Rhea" id="RHEA:16441"/>
        <dbReference type="Rhea" id="RHEA-COMP:10207"/>
        <dbReference type="Rhea" id="RHEA-COMP:10208"/>
        <dbReference type="ChEBI" id="CHEBI:15377"/>
        <dbReference type="ChEBI" id="CHEBI:28938"/>
        <dbReference type="ChEBI" id="CHEBI:29973"/>
        <dbReference type="ChEBI" id="CHEBI:30011"/>
        <dbReference type="EC" id="3.5.1.44"/>
    </reaction>
</comment>
<comment type="subcellular location">
    <subcellularLocation>
        <location evidence="1">Cytoplasm</location>
    </subcellularLocation>
</comment>
<comment type="domain">
    <text evidence="1">Contains a C-terminal catalytic domain, and an N-terminal region which modulates catalytic activity.</text>
</comment>
<comment type="PTM">
    <text evidence="1">Phosphorylated by CheA. Phosphorylation of the N-terminal regulatory domain activates the methylesterase activity.</text>
</comment>
<comment type="similarity">
    <text evidence="1">Belongs to the CheB family.</text>
</comment>
<name>CHEB2_METHJ</name>
<dbReference type="EC" id="3.1.1.61" evidence="1"/>
<dbReference type="EC" id="3.5.1.44" evidence="1"/>
<dbReference type="EMBL" id="CP000254">
    <property type="protein sequence ID" value="ABD40738.1"/>
    <property type="molecule type" value="Genomic_DNA"/>
</dbReference>
<dbReference type="RefSeq" id="WP_011448017.1">
    <property type="nucleotide sequence ID" value="NC_007796.1"/>
</dbReference>
<dbReference type="SMR" id="Q2FQU2"/>
<dbReference type="STRING" id="323259.Mhun_0988"/>
<dbReference type="EnsemblBacteria" id="ABD40738">
    <property type="protein sequence ID" value="ABD40738"/>
    <property type="gene ID" value="Mhun_0988"/>
</dbReference>
<dbReference type="GeneID" id="3924035"/>
<dbReference type="KEGG" id="mhu:Mhun_0988"/>
<dbReference type="eggNOG" id="arCOG02382">
    <property type="taxonomic scope" value="Archaea"/>
</dbReference>
<dbReference type="HOGENOM" id="CLU_000445_51_0_2"/>
<dbReference type="InParanoid" id="Q2FQU2"/>
<dbReference type="OrthoDB" id="2857at2157"/>
<dbReference type="Proteomes" id="UP000001941">
    <property type="component" value="Chromosome"/>
</dbReference>
<dbReference type="GO" id="GO:0005737">
    <property type="term" value="C:cytoplasm"/>
    <property type="evidence" value="ECO:0007669"/>
    <property type="project" value="UniProtKB-SubCell"/>
</dbReference>
<dbReference type="GO" id="GO:0000156">
    <property type="term" value="F:phosphorelay response regulator activity"/>
    <property type="evidence" value="ECO:0007669"/>
    <property type="project" value="InterPro"/>
</dbReference>
<dbReference type="GO" id="GO:0008984">
    <property type="term" value="F:protein-glutamate methylesterase activity"/>
    <property type="evidence" value="ECO:0007669"/>
    <property type="project" value="UniProtKB-UniRule"/>
</dbReference>
<dbReference type="GO" id="GO:0050568">
    <property type="term" value="F:protein-glutamine glutaminase activity"/>
    <property type="evidence" value="ECO:0007669"/>
    <property type="project" value="UniProtKB-UniRule"/>
</dbReference>
<dbReference type="GO" id="GO:0006935">
    <property type="term" value="P:chemotaxis"/>
    <property type="evidence" value="ECO:0007669"/>
    <property type="project" value="UniProtKB-UniRule"/>
</dbReference>
<dbReference type="CDD" id="cd16432">
    <property type="entry name" value="CheB_Rec"/>
    <property type="match status" value="1"/>
</dbReference>
<dbReference type="CDD" id="cd17541">
    <property type="entry name" value="REC_CheB-like"/>
    <property type="match status" value="1"/>
</dbReference>
<dbReference type="Gene3D" id="3.40.50.2300">
    <property type="match status" value="1"/>
</dbReference>
<dbReference type="Gene3D" id="3.40.50.180">
    <property type="entry name" value="Methylesterase CheB, C-terminal domain"/>
    <property type="match status" value="1"/>
</dbReference>
<dbReference type="HAMAP" id="MF_00099">
    <property type="entry name" value="CheB_chemtxs"/>
    <property type="match status" value="1"/>
</dbReference>
<dbReference type="InterPro" id="IPR008248">
    <property type="entry name" value="CheB-like"/>
</dbReference>
<dbReference type="InterPro" id="IPR035909">
    <property type="entry name" value="CheB_C"/>
</dbReference>
<dbReference type="InterPro" id="IPR011006">
    <property type="entry name" value="CheY-like_superfamily"/>
</dbReference>
<dbReference type="InterPro" id="IPR000673">
    <property type="entry name" value="Sig_transdc_resp-reg_Me-estase"/>
</dbReference>
<dbReference type="InterPro" id="IPR001789">
    <property type="entry name" value="Sig_transdc_resp-reg_receiver"/>
</dbReference>
<dbReference type="NCBIfam" id="NF001965">
    <property type="entry name" value="PRK00742.1"/>
    <property type="match status" value="1"/>
</dbReference>
<dbReference type="PANTHER" id="PTHR42872">
    <property type="entry name" value="PROTEIN-GLUTAMATE METHYLESTERASE/PROTEIN-GLUTAMINE GLUTAMINASE"/>
    <property type="match status" value="1"/>
</dbReference>
<dbReference type="PANTHER" id="PTHR42872:SF6">
    <property type="entry name" value="PROTEIN-GLUTAMATE METHYLESTERASE_PROTEIN-GLUTAMINE GLUTAMINASE"/>
    <property type="match status" value="1"/>
</dbReference>
<dbReference type="Pfam" id="PF01339">
    <property type="entry name" value="CheB_methylest"/>
    <property type="match status" value="1"/>
</dbReference>
<dbReference type="Pfam" id="PF00072">
    <property type="entry name" value="Response_reg"/>
    <property type="match status" value="1"/>
</dbReference>
<dbReference type="PIRSF" id="PIRSF000876">
    <property type="entry name" value="RR_chemtxs_CheB"/>
    <property type="match status" value="1"/>
</dbReference>
<dbReference type="SMART" id="SM00448">
    <property type="entry name" value="REC"/>
    <property type="match status" value="1"/>
</dbReference>
<dbReference type="SUPFAM" id="SSF52172">
    <property type="entry name" value="CheY-like"/>
    <property type="match status" value="1"/>
</dbReference>
<dbReference type="SUPFAM" id="SSF52738">
    <property type="entry name" value="Methylesterase CheB, C-terminal domain"/>
    <property type="match status" value="1"/>
</dbReference>
<dbReference type="PROSITE" id="PS50122">
    <property type="entry name" value="CHEB"/>
    <property type="match status" value="1"/>
</dbReference>
<dbReference type="PROSITE" id="PS50110">
    <property type="entry name" value="RESPONSE_REGULATORY"/>
    <property type="match status" value="1"/>
</dbReference>
<gene>
    <name evidence="1" type="primary">cheB2</name>
    <name type="ordered locus">Mhun_0988</name>
</gene>
<evidence type="ECO:0000255" key="1">
    <source>
        <dbReference type="HAMAP-Rule" id="MF_00099"/>
    </source>
</evidence>
<sequence>MIRVLLVDDSPVTLMVLQSILEKEPDISVIGQAKNGKEAIILASRLAPDIITMDINMPDLDGFATTRQIMERTPVPIIIVSGIDNLEEIRASFRAVEAGALAVFRKPPAYGDPDYEEAVSEFVNAIRTYSEVKVIRRRSNHLKVPKPEASTIQIPFQIHQDIRVIVIGASTGGPQVIQEIISNLPLGFPLPLVLVQHMSPGFIEGLALWLTESTGFPVSIAREGEVLQPGKLYVAPDGIHTGVTSDLRFSFSISPPEHNLRPSVSYLFRSAAKNLGSHVLGILLSGMGSDGAEELLQIRQNGGCTIIQDRDSSFVYGMPGAAEMLNAGMFSLPPVEIARFLRSLSERRQL</sequence>
<reference key="1">
    <citation type="journal article" date="2016" name="Stand. Genomic Sci.">
        <title>Complete genome sequence of Methanospirillum hungatei type strain JF1.</title>
        <authorList>
            <person name="Gunsalus R.P."/>
            <person name="Cook L.E."/>
            <person name="Crable B."/>
            <person name="Rohlin L."/>
            <person name="McDonald E."/>
            <person name="Mouttaki H."/>
            <person name="Sieber J.R."/>
            <person name="Poweleit N."/>
            <person name="Zhou H."/>
            <person name="Lapidus A.L."/>
            <person name="Daligault H.E."/>
            <person name="Land M."/>
            <person name="Gilna P."/>
            <person name="Ivanova N."/>
            <person name="Kyrpides N."/>
            <person name="Culley D.E."/>
            <person name="McInerney M.J."/>
        </authorList>
    </citation>
    <scope>NUCLEOTIDE SEQUENCE [LARGE SCALE GENOMIC DNA]</scope>
    <source>
        <strain>ATCC 27890 / DSM 864 / NBRC 100397 / JF-1</strain>
    </source>
</reference>
<protein>
    <recommendedName>
        <fullName evidence="1">Protein-glutamate methylesterase/protein-glutamine glutaminase 2</fullName>
        <ecNumber evidence="1">3.1.1.61</ecNumber>
        <ecNumber evidence="1">3.5.1.44</ecNumber>
    </recommendedName>
</protein>